<feature type="chain" id="PRO_1000050618" description="Peptidase E">
    <location>
        <begin position="1"/>
        <end position="236"/>
    </location>
</feature>
<feature type="active site" description="Charge relay system" evidence="1">
    <location>
        <position position="122"/>
    </location>
</feature>
<feature type="active site" description="Charge relay system" evidence="1">
    <location>
        <position position="137"/>
    </location>
</feature>
<feature type="active site" description="Charge relay system" evidence="1">
    <location>
        <position position="159"/>
    </location>
</feature>
<sequence>MTINALLLSSSRVGDTPYLSHALPFIKPLTANAQKWIFIPYAGVSMSYDTYLASVVAGLSELRLDISGIHQHPDPRQAIKDADGILIGGGNTFHLLHELYKYDLVHLIREEVQNGKPYIGWSAGSNVSGLSIRTTNDMPIIEPPSFTALNIVPFQLNPHYSNYRAPGHNGETRAQRLLEFTRVDPITPVVGIVEGSALWRQGDTLSLLGDNPAYLFCGEQQEIPIPVGSDLSHLLK</sequence>
<reference key="1">
    <citation type="submission" date="2006-09" db="EMBL/GenBank/DDBJ databases">
        <title>Complete sequence of chromosome 1 of Shewanella sp. ANA-3.</title>
        <authorList>
            <person name="Copeland A."/>
            <person name="Lucas S."/>
            <person name="Lapidus A."/>
            <person name="Barry K."/>
            <person name="Detter J.C."/>
            <person name="Glavina del Rio T."/>
            <person name="Hammon N."/>
            <person name="Israni S."/>
            <person name="Dalin E."/>
            <person name="Tice H."/>
            <person name="Pitluck S."/>
            <person name="Chertkov O."/>
            <person name="Brettin T."/>
            <person name="Bruce D."/>
            <person name="Han C."/>
            <person name="Tapia R."/>
            <person name="Gilna P."/>
            <person name="Schmutz J."/>
            <person name="Larimer F."/>
            <person name="Land M."/>
            <person name="Hauser L."/>
            <person name="Kyrpides N."/>
            <person name="Kim E."/>
            <person name="Newman D."/>
            <person name="Salticov C."/>
            <person name="Konstantinidis K."/>
            <person name="Klappenback J."/>
            <person name="Tiedje J."/>
            <person name="Richardson P."/>
        </authorList>
    </citation>
    <scope>NUCLEOTIDE SEQUENCE [LARGE SCALE GENOMIC DNA]</scope>
    <source>
        <strain>ANA-3</strain>
    </source>
</reference>
<evidence type="ECO:0000255" key="1">
    <source>
        <dbReference type="HAMAP-Rule" id="MF_00510"/>
    </source>
</evidence>
<proteinExistence type="inferred from homology"/>
<gene>
    <name evidence="1" type="primary">pepE</name>
    <name type="ordered locus">Shewana3_2513</name>
</gene>
<accession>A0KY73</accession>
<comment type="function">
    <text evidence="1">Hydrolyzes dipeptides containing N-terminal aspartate residues. May play a role in allowing the cell to use peptide aspartate to spare carbon otherwise required for the synthesis of the aspartate family of amino acids.</text>
</comment>
<comment type="catalytic activity">
    <reaction evidence="1">
        <text>Dipeptidase E catalyzes the hydrolysis of dipeptides Asp-|-Xaa. It does not act on peptides with N-terminal Glu, Asn or Gln, nor does it cleave isoaspartyl peptides.</text>
        <dbReference type="EC" id="3.4.13.21"/>
    </reaction>
</comment>
<comment type="subcellular location">
    <subcellularLocation>
        <location evidence="1">Cytoplasm</location>
    </subcellularLocation>
</comment>
<comment type="similarity">
    <text evidence="1">Belongs to the peptidase S51 family.</text>
</comment>
<dbReference type="EC" id="3.4.13.21" evidence="1"/>
<dbReference type="EMBL" id="CP000469">
    <property type="protein sequence ID" value="ABK48742.1"/>
    <property type="molecule type" value="Genomic_DNA"/>
</dbReference>
<dbReference type="RefSeq" id="WP_011717430.1">
    <property type="nucleotide sequence ID" value="NC_008577.1"/>
</dbReference>
<dbReference type="SMR" id="A0KY73"/>
<dbReference type="STRING" id="94122.Shewana3_2513"/>
<dbReference type="MEROPS" id="S51.001"/>
<dbReference type="KEGG" id="shn:Shewana3_2513"/>
<dbReference type="eggNOG" id="COG3340">
    <property type="taxonomic scope" value="Bacteria"/>
</dbReference>
<dbReference type="HOGENOM" id="CLU_071689_0_0_6"/>
<dbReference type="OrthoDB" id="3373764at2"/>
<dbReference type="Proteomes" id="UP000002589">
    <property type="component" value="Chromosome"/>
</dbReference>
<dbReference type="GO" id="GO:0005737">
    <property type="term" value="C:cytoplasm"/>
    <property type="evidence" value="ECO:0007669"/>
    <property type="project" value="UniProtKB-SubCell"/>
</dbReference>
<dbReference type="GO" id="GO:0016805">
    <property type="term" value="F:dipeptidase activity"/>
    <property type="evidence" value="ECO:0007669"/>
    <property type="project" value="UniProtKB-UniRule"/>
</dbReference>
<dbReference type="GO" id="GO:0008236">
    <property type="term" value="F:serine-type peptidase activity"/>
    <property type="evidence" value="ECO:0007669"/>
    <property type="project" value="UniProtKB-KW"/>
</dbReference>
<dbReference type="GO" id="GO:0006508">
    <property type="term" value="P:proteolysis"/>
    <property type="evidence" value="ECO:0007669"/>
    <property type="project" value="UniProtKB-UniRule"/>
</dbReference>
<dbReference type="CDD" id="cd03146">
    <property type="entry name" value="GAT1_Peptidase_E"/>
    <property type="match status" value="1"/>
</dbReference>
<dbReference type="FunFam" id="3.40.50.880:FF:000007">
    <property type="entry name" value="Peptidase E"/>
    <property type="match status" value="1"/>
</dbReference>
<dbReference type="Gene3D" id="3.40.50.880">
    <property type="match status" value="1"/>
</dbReference>
<dbReference type="HAMAP" id="MF_00510">
    <property type="entry name" value="Peptidase_E"/>
    <property type="match status" value="1"/>
</dbReference>
<dbReference type="InterPro" id="IPR029062">
    <property type="entry name" value="Class_I_gatase-like"/>
</dbReference>
<dbReference type="InterPro" id="IPR005320">
    <property type="entry name" value="Peptidase_S51"/>
</dbReference>
<dbReference type="InterPro" id="IPR023172">
    <property type="entry name" value="Peptidase_S51_dipeptidase-E"/>
</dbReference>
<dbReference type="NCBIfam" id="NF003642">
    <property type="entry name" value="PRK05282.1"/>
    <property type="match status" value="1"/>
</dbReference>
<dbReference type="PANTHER" id="PTHR20842:SF0">
    <property type="entry name" value="ALPHA-ASPARTYL DIPEPTIDASE"/>
    <property type="match status" value="1"/>
</dbReference>
<dbReference type="PANTHER" id="PTHR20842">
    <property type="entry name" value="PROTEASE S51 ALPHA-ASPARTYL DIPEPTIDASE"/>
    <property type="match status" value="1"/>
</dbReference>
<dbReference type="Pfam" id="PF03575">
    <property type="entry name" value="Peptidase_S51"/>
    <property type="match status" value="1"/>
</dbReference>
<dbReference type="SUPFAM" id="SSF52317">
    <property type="entry name" value="Class I glutamine amidotransferase-like"/>
    <property type="match status" value="1"/>
</dbReference>
<organism>
    <name type="scientific">Shewanella sp. (strain ANA-3)</name>
    <dbReference type="NCBI Taxonomy" id="94122"/>
    <lineage>
        <taxon>Bacteria</taxon>
        <taxon>Pseudomonadati</taxon>
        <taxon>Pseudomonadota</taxon>
        <taxon>Gammaproteobacteria</taxon>
        <taxon>Alteromonadales</taxon>
        <taxon>Shewanellaceae</taxon>
        <taxon>Shewanella</taxon>
    </lineage>
</organism>
<keyword id="KW-0963">Cytoplasm</keyword>
<keyword id="KW-0224">Dipeptidase</keyword>
<keyword id="KW-0378">Hydrolase</keyword>
<keyword id="KW-0645">Protease</keyword>
<keyword id="KW-0720">Serine protease</keyword>
<protein>
    <recommendedName>
        <fullName evidence="1">Peptidase E</fullName>
        <ecNumber evidence="1">3.4.13.21</ecNumber>
    </recommendedName>
    <alternativeName>
        <fullName evidence="1">Alpha-aspartyl dipeptidase</fullName>
    </alternativeName>
    <alternativeName>
        <fullName evidence="1">Asp-specific dipeptidase</fullName>
    </alternativeName>
    <alternativeName>
        <fullName evidence="1">Dipeptidase E</fullName>
    </alternativeName>
</protein>
<name>PEPE_SHESA</name>